<proteinExistence type="evidence at protein level"/>
<protein>
    <recommendedName>
        <fullName>Putative aldehyde dehydrogenase AldA</fullName>
        <ecNumber>1.2.1.3</ecNumber>
    </recommendedName>
</protein>
<keyword id="KW-0520">NAD</keyword>
<keyword id="KW-0560">Oxidoreductase</keyword>
<feature type="chain" id="PRO_0000056457" description="Putative aldehyde dehydrogenase AldA">
    <location>
        <begin position="1"/>
        <end position="495"/>
    </location>
</feature>
<feature type="active site" evidence="1">
    <location>
        <position position="256"/>
    </location>
</feature>
<feature type="active site" evidence="1">
    <location>
        <position position="290"/>
    </location>
</feature>
<feature type="binding site" evidence="1">
    <location>
        <begin position="212"/>
        <end position="218"/>
    </location>
    <ligand>
        <name>NAD(+)</name>
        <dbReference type="ChEBI" id="CHEBI:57540"/>
    </ligand>
</feature>
<sequence>MAVNVRDYIAENYGLFINGEFVKGSSDETIEVTNPATGETLSHITRAKDKDVDHAVKVAQEAFESWSLTSKSERAQMLRDIGDKLMAQKDKIAMIETLNNGKPIRETTAIDIPFAARHFHYFASVIETEEGTVNDIDKDTMSIVRHEPIGVVGAVVAWNFPMLLAAWKIAPAIAAGNTIVIQPSSSTPLSLLEVAKIFQEVLPKGVVNILTGKGSESGNAIFNHDGVDKLSFTGSTDVGYQVAEAAAKHLVPATLELGGKSANIILDDANLDLAVEGIQLGILFNQGEVCSAGSRLLVHEKIYDQLVPRLQEAFSNIKVGDPQDEATQMGSQTGKDQLDKIQSYIDAAKESDAQILAGGHRLTENGLDKGFFFEPTLIAVPDNHHKLAQEEIFGPVLTVIKVKDDQEAIDIANDSEYGLAGGVFSQNITRALNIAKAVRTGRIWINTYNQVPEGAPFGGYKKSGIGRETYKGALSNYQQVKNIYIDTSNALKGLY</sequence>
<dbReference type="EC" id="1.2.1.3"/>
<dbReference type="EMBL" id="BA000018">
    <property type="protein sequence ID" value="BAB41382.1"/>
    <property type="molecule type" value="Genomic_DNA"/>
</dbReference>
<dbReference type="PIR" id="C89778">
    <property type="entry name" value="C89778"/>
</dbReference>
<dbReference type="RefSeq" id="WP_000290397.1">
    <property type="nucleotide sequence ID" value="NC_002745.2"/>
</dbReference>
<dbReference type="SMR" id="Q7A825"/>
<dbReference type="EnsemblBacteria" id="BAB41382">
    <property type="protein sequence ID" value="BAB41382"/>
    <property type="gene ID" value="BAB41382"/>
</dbReference>
<dbReference type="KEGG" id="sau:SA0162"/>
<dbReference type="HOGENOM" id="CLU_005391_0_2_9"/>
<dbReference type="GO" id="GO:0004029">
    <property type="term" value="F:aldehyde dehydrogenase (NAD+) activity"/>
    <property type="evidence" value="ECO:0007669"/>
    <property type="project" value="UniProtKB-EC"/>
</dbReference>
<dbReference type="CDD" id="cd07117">
    <property type="entry name" value="ALDH_StaphAldA1"/>
    <property type="match status" value="1"/>
</dbReference>
<dbReference type="FunFam" id="3.40.309.10:FF:000012">
    <property type="entry name" value="Betaine aldehyde dehydrogenase"/>
    <property type="match status" value="1"/>
</dbReference>
<dbReference type="FunFam" id="3.40.605.10:FF:000007">
    <property type="entry name" value="NAD/NADP-dependent betaine aldehyde dehydrogenase"/>
    <property type="match status" value="1"/>
</dbReference>
<dbReference type="Gene3D" id="3.40.605.10">
    <property type="entry name" value="Aldehyde Dehydrogenase, Chain A, domain 1"/>
    <property type="match status" value="1"/>
</dbReference>
<dbReference type="Gene3D" id="3.40.309.10">
    <property type="entry name" value="Aldehyde Dehydrogenase, Chain A, domain 2"/>
    <property type="match status" value="1"/>
</dbReference>
<dbReference type="InterPro" id="IPR016161">
    <property type="entry name" value="Ald_DH/histidinol_DH"/>
</dbReference>
<dbReference type="InterPro" id="IPR016163">
    <property type="entry name" value="Ald_DH_C"/>
</dbReference>
<dbReference type="InterPro" id="IPR016160">
    <property type="entry name" value="Ald_DH_CS_CYS"/>
</dbReference>
<dbReference type="InterPro" id="IPR029510">
    <property type="entry name" value="Ald_DH_CS_GLU"/>
</dbReference>
<dbReference type="InterPro" id="IPR016162">
    <property type="entry name" value="Ald_DH_N"/>
</dbReference>
<dbReference type="InterPro" id="IPR015590">
    <property type="entry name" value="Aldehyde_DH_dom"/>
</dbReference>
<dbReference type="PANTHER" id="PTHR43111">
    <property type="entry name" value="ALDEHYDE DEHYDROGENASE B-RELATED"/>
    <property type="match status" value="1"/>
</dbReference>
<dbReference type="PANTHER" id="PTHR43111:SF1">
    <property type="entry name" value="ALDEHYDE DEHYDROGENASE B-RELATED"/>
    <property type="match status" value="1"/>
</dbReference>
<dbReference type="Pfam" id="PF00171">
    <property type="entry name" value="Aldedh"/>
    <property type="match status" value="1"/>
</dbReference>
<dbReference type="SUPFAM" id="SSF53720">
    <property type="entry name" value="ALDH-like"/>
    <property type="match status" value="1"/>
</dbReference>
<dbReference type="PROSITE" id="PS00070">
    <property type="entry name" value="ALDEHYDE_DEHYDR_CYS"/>
    <property type="match status" value="1"/>
</dbReference>
<dbReference type="PROSITE" id="PS00687">
    <property type="entry name" value="ALDEHYDE_DEHYDR_GLU"/>
    <property type="match status" value="1"/>
</dbReference>
<accession>Q7A825</accession>
<name>ALDA_STAAN</name>
<evidence type="ECO:0000250" key="1"/>
<evidence type="ECO:0000305" key="2"/>
<organism>
    <name type="scientific">Staphylococcus aureus (strain N315)</name>
    <dbReference type="NCBI Taxonomy" id="158879"/>
    <lineage>
        <taxon>Bacteria</taxon>
        <taxon>Bacillati</taxon>
        <taxon>Bacillota</taxon>
        <taxon>Bacilli</taxon>
        <taxon>Bacillales</taxon>
        <taxon>Staphylococcaceae</taxon>
        <taxon>Staphylococcus</taxon>
    </lineage>
</organism>
<comment type="catalytic activity">
    <reaction>
        <text>an aldehyde + NAD(+) + H2O = a carboxylate + NADH + 2 H(+)</text>
        <dbReference type="Rhea" id="RHEA:16185"/>
        <dbReference type="ChEBI" id="CHEBI:15377"/>
        <dbReference type="ChEBI" id="CHEBI:15378"/>
        <dbReference type="ChEBI" id="CHEBI:17478"/>
        <dbReference type="ChEBI" id="CHEBI:29067"/>
        <dbReference type="ChEBI" id="CHEBI:57540"/>
        <dbReference type="ChEBI" id="CHEBI:57945"/>
        <dbReference type="EC" id="1.2.1.3"/>
    </reaction>
</comment>
<comment type="similarity">
    <text evidence="2">Belongs to the aldehyde dehydrogenase family.</text>
</comment>
<reference key="1">
    <citation type="journal article" date="2001" name="Lancet">
        <title>Whole genome sequencing of meticillin-resistant Staphylococcus aureus.</title>
        <authorList>
            <person name="Kuroda M."/>
            <person name="Ohta T."/>
            <person name="Uchiyama I."/>
            <person name="Baba T."/>
            <person name="Yuzawa H."/>
            <person name="Kobayashi I."/>
            <person name="Cui L."/>
            <person name="Oguchi A."/>
            <person name="Aoki K."/>
            <person name="Nagai Y."/>
            <person name="Lian J.-Q."/>
            <person name="Ito T."/>
            <person name="Kanamori M."/>
            <person name="Matsumaru H."/>
            <person name="Maruyama A."/>
            <person name="Murakami H."/>
            <person name="Hosoyama A."/>
            <person name="Mizutani-Ui Y."/>
            <person name="Takahashi N.K."/>
            <person name="Sawano T."/>
            <person name="Inoue R."/>
            <person name="Kaito C."/>
            <person name="Sekimizu K."/>
            <person name="Hirakawa H."/>
            <person name="Kuhara S."/>
            <person name="Goto S."/>
            <person name="Yabuzaki J."/>
            <person name="Kanehisa M."/>
            <person name="Yamashita A."/>
            <person name="Oshima K."/>
            <person name="Furuya K."/>
            <person name="Yoshino C."/>
            <person name="Shiba T."/>
            <person name="Hattori M."/>
            <person name="Ogasawara N."/>
            <person name="Hayashi H."/>
            <person name="Hiramatsu K."/>
        </authorList>
    </citation>
    <scope>NUCLEOTIDE SEQUENCE [LARGE SCALE GENOMIC DNA]</scope>
    <source>
        <strain>N315</strain>
    </source>
</reference>
<reference key="2">
    <citation type="journal article" date="2005" name="J. Microbiol. Methods">
        <title>Correlation of proteomic and transcriptomic profiles of Staphylococcus aureus during the post-exponential phase of growth.</title>
        <authorList>
            <person name="Scherl A."/>
            <person name="Francois P."/>
            <person name="Bento M."/>
            <person name="Deshusses J.M."/>
            <person name="Charbonnier Y."/>
            <person name="Converset V."/>
            <person name="Huyghe A."/>
            <person name="Walter N."/>
            <person name="Hoogland C."/>
            <person name="Appel R.D."/>
            <person name="Sanchez J.-C."/>
            <person name="Zimmermann-Ivol C.G."/>
            <person name="Corthals G.L."/>
            <person name="Hochstrasser D.F."/>
            <person name="Schrenzel J."/>
        </authorList>
    </citation>
    <scope>IDENTIFICATION BY MASS SPECTROMETRY</scope>
    <source>
        <strain>N315</strain>
    </source>
</reference>
<reference key="3">
    <citation type="submission" date="2007-10" db="UniProtKB">
        <title>Shotgun proteomic analysis of total and membrane protein extracts of S. aureus strain N315.</title>
        <authorList>
            <person name="Vaezzadeh A.R."/>
            <person name="Deshusses J."/>
            <person name="Lescuyer P."/>
            <person name="Hochstrasser D.F."/>
        </authorList>
    </citation>
    <scope>IDENTIFICATION BY MASS SPECTROMETRY [LARGE SCALE ANALYSIS]</scope>
    <source>
        <strain>N315</strain>
    </source>
</reference>
<gene>
    <name type="primary">aldA</name>
    <name type="ordered locus">SA0162</name>
</gene>